<protein>
    <recommendedName>
        <fullName evidence="1">Co-chaperone protein HscB homolog</fullName>
    </recommendedName>
</protein>
<dbReference type="EMBL" id="CP000931">
    <property type="protein sequence ID" value="ABZ76141.1"/>
    <property type="molecule type" value="Genomic_DNA"/>
</dbReference>
<dbReference type="RefSeq" id="WP_012276680.1">
    <property type="nucleotide sequence ID" value="NC_010334.1"/>
</dbReference>
<dbReference type="SMR" id="B0TNY4"/>
<dbReference type="STRING" id="458817.Shal_1575"/>
<dbReference type="KEGG" id="shl:Shal_1575"/>
<dbReference type="eggNOG" id="COG1076">
    <property type="taxonomic scope" value="Bacteria"/>
</dbReference>
<dbReference type="HOGENOM" id="CLU_068529_2_0_6"/>
<dbReference type="OrthoDB" id="287587at2"/>
<dbReference type="Proteomes" id="UP000001317">
    <property type="component" value="Chromosome"/>
</dbReference>
<dbReference type="GO" id="GO:1990230">
    <property type="term" value="C:iron-sulfur cluster transfer complex"/>
    <property type="evidence" value="ECO:0007669"/>
    <property type="project" value="TreeGrafter"/>
</dbReference>
<dbReference type="GO" id="GO:0001671">
    <property type="term" value="F:ATPase activator activity"/>
    <property type="evidence" value="ECO:0007669"/>
    <property type="project" value="InterPro"/>
</dbReference>
<dbReference type="GO" id="GO:0051087">
    <property type="term" value="F:protein-folding chaperone binding"/>
    <property type="evidence" value="ECO:0007669"/>
    <property type="project" value="InterPro"/>
</dbReference>
<dbReference type="GO" id="GO:0044571">
    <property type="term" value="P:[2Fe-2S] cluster assembly"/>
    <property type="evidence" value="ECO:0007669"/>
    <property type="project" value="InterPro"/>
</dbReference>
<dbReference type="GO" id="GO:0051259">
    <property type="term" value="P:protein complex oligomerization"/>
    <property type="evidence" value="ECO:0007669"/>
    <property type="project" value="InterPro"/>
</dbReference>
<dbReference type="GO" id="GO:0006457">
    <property type="term" value="P:protein folding"/>
    <property type="evidence" value="ECO:0007669"/>
    <property type="project" value="UniProtKB-UniRule"/>
</dbReference>
<dbReference type="CDD" id="cd06257">
    <property type="entry name" value="DnaJ"/>
    <property type="match status" value="1"/>
</dbReference>
<dbReference type="Gene3D" id="1.10.287.110">
    <property type="entry name" value="DnaJ domain"/>
    <property type="match status" value="1"/>
</dbReference>
<dbReference type="Gene3D" id="1.20.1280.20">
    <property type="entry name" value="HscB, C-terminal domain"/>
    <property type="match status" value="1"/>
</dbReference>
<dbReference type="HAMAP" id="MF_00682">
    <property type="entry name" value="HscB"/>
    <property type="match status" value="1"/>
</dbReference>
<dbReference type="InterPro" id="IPR001623">
    <property type="entry name" value="DnaJ_domain"/>
</dbReference>
<dbReference type="InterPro" id="IPR004640">
    <property type="entry name" value="HscB"/>
</dbReference>
<dbReference type="InterPro" id="IPR036386">
    <property type="entry name" value="HscB_C_sf"/>
</dbReference>
<dbReference type="InterPro" id="IPR009073">
    <property type="entry name" value="HscB_oligo_C"/>
</dbReference>
<dbReference type="InterPro" id="IPR036869">
    <property type="entry name" value="J_dom_sf"/>
</dbReference>
<dbReference type="NCBIfam" id="TIGR00714">
    <property type="entry name" value="hscB"/>
    <property type="match status" value="1"/>
</dbReference>
<dbReference type="NCBIfam" id="NF003449">
    <property type="entry name" value="PRK05014.1"/>
    <property type="match status" value="1"/>
</dbReference>
<dbReference type="PANTHER" id="PTHR14021">
    <property type="entry name" value="IRON-SULFUR CLUSTER CO-CHAPERONE PROTEIN HSCB"/>
    <property type="match status" value="1"/>
</dbReference>
<dbReference type="PANTHER" id="PTHR14021:SF15">
    <property type="entry name" value="IRON-SULFUR CLUSTER CO-CHAPERONE PROTEIN HSCB"/>
    <property type="match status" value="1"/>
</dbReference>
<dbReference type="Pfam" id="PF07743">
    <property type="entry name" value="HSCB_C"/>
    <property type="match status" value="1"/>
</dbReference>
<dbReference type="SMART" id="SM00271">
    <property type="entry name" value="DnaJ"/>
    <property type="match status" value="1"/>
</dbReference>
<dbReference type="SUPFAM" id="SSF46565">
    <property type="entry name" value="Chaperone J-domain"/>
    <property type="match status" value="1"/>
</dbReference>
<dbReference type="SUPFAM" id="SSF47144">
    <property type="entry name" value="HSC20 (HSCB), C-terminal oligomerisation domain"/>
    <property type="match status" value="1"/>
</dbReference>
<dbReference type="PROSITE" id="PS50076">
    <property type="entry name" value="DNAJ_2"/>
    <property type="match status" value="1"/>
</dbReference>
<organism>
    <name type="scientific">Shewanella halifaxensis (strain HAW-EB4)</name>
    <dbReference type="NCBI Taxonomy" id="458817"/>
    <lineage>
        <taxon>Bacteria</taxon>
        <taxon>Pseudomonadati</taxon>
        <taxon>Pseudomonadota</taxon>
        <taxon>Gammaproteobacteria</taxon>
        <taxon>Alteromonadales</taxon>
        <taxon>Shewanellaceae</taxon>
        <taxon>Shewanella</taxon>
    </lineage>
</organism>
<evidence type="ECO:0000255" key="1">
    <source>
        <dbReference type="HAMAP-Rule" id="MF_00682"/>
    </source>
</evidence>
<name>HSCB_SHEHH</name>
<proteinExistence type="inferred from homology"/>
<comment type="function">
    <text evidence="1">Co-chaperone involved in the maturation of iron-sulfur cluster-containing proteins. Seems to help targeting proteins to be folded toward HscA.</text>
</comment>
<comment type="subunit">
    <text evidence="1">Interacts with HscA and stimulates its ATPase activity.</text>
</comment>
<comment type="similarity">
    <text evidence="1">Belongs to the HscB family.</text>
</comment>
<feature type="chain" id="PRO_1000083039" description="Co-chaperone protein HscB homolog">
    <location>
        <begin position="1"/>
        <end position="174"/>
    </location>
</feature>
<feature type="domain" description="J" evidence="1">
    <location>
        <begin position="2"/>
        <end position="74"/>
    </location>
</feature>
<reference key="1">
    <citation type="submission" date="2008-01" db="EMBL/GenBank/DDBJ databases">
        <title>Complete sequence of Shewanella halifaxensis HAW-EB4.</title>
        <authorList>
            <consortium name="US DOE Joint Genome Institute"/>
            <person name="Copeland A."/>
            <person name="Lucas S."/>
            <person name="Lapidus A."/>
            <person name="Glavina del Rio T."/>
            <person name="Dalin E."/>
            <person name="Tice H."/>
            <person name="Bruce D."/>
            <person name="Goodwin L."/>
            <person name="Pitluck S."/>
            <person name="Sims D."/>
            <person name="Brettin T."/>
            <person name="Detter J.C."/>
            <person name="Han C."/>
            <person name="Kuske C.R."/>
            <person name="Schmutz J."/>
            <person name="Larimer F."/>
            <person name="Land M."/>
            <person name="Hauser L."/>
            <person name="Kyrpides N."/>
            <person name="Kim E."/>
            <person name="Zhao J.-S."/>
            <person name="Richardson P."/>
        </authorList>
    </citation>
    <scope>NUCLEOTIDE SEQUENCE [LARGE SCALE GENOMIC DNA]</scope>
    <source>
        <strain>HAW-EB4</strain>
    </source>
</reference>
<accession>B0TNY4</accession>
<keyword id="KW-0143">Chaperone</keyword>
<sequence>MNYFELFSLLPSYDVDTALLAERYRELQRAVHPDKFANASEQDKRLSVQRTAQINDAFQTLKNPIQRAEHLLTLKGLELSHESTTLKDTQFLMQQMEWRESLEEIKHSDDPDSEIAELYDSFEQYARQITTELKPLLVSELEADHLQAAEQIRKLKFMAKLQDELTRVEDALFD</sequence>
<gene>
    <name evidence="1" type="primary">hscB</name>
    <name type="ordered locus">Shal_1575</name>
</gene>